<comment type="function">
    <text evidence="1">Binds directly to 23S ribosomal RNA and is necessary for the in vitro assembly process of the 50S ribosomal subunit. It is not involved in the protein synthesizing functions of that subunit.</text>
</comment>
<comment type="similarity">
    <text evidence="1">Belongs to the bacterial ribosomal protein bL20 family.</text>
</comment>
<protein>
    <recommendedName>
        <fullName evidence="1">Large ribosomal subunit protein bL20</fullName>
    </recommendedName>
    <alternativeName>
        <fullName evidence="2">50S ribosomal protein L20</fullName>
    </alternativeName>
</protein>
<keyword id="KW-0687">Ribonucleoprotein</keyword>
<keyword id="KW-0689">Ribosomal protein</keyword>
<keyword id="KW-0694">RNA-binding</keyword>
<keyword id="KW-0699">rRNA-binding</keyword>
<sequence>MRVKRAVHAKKKRKKFLKEAKGYRGALSRRYKLAKQMYIRSKWYSYVGRKIKKRDMRKLWITRINIAARNEGLKYSEFIHGLKLAGVSINRKMLSELAVNDPEAFKEYVRIAKEALAS</sequence>
<gene>
    <name evidence="1" type="primary">rplT</name>
    <name type="ordered locus">CTN_0867</name>
</gene>
<organism>
    <name type="scientific">Thermotoga neapolitana (strain ATCC 49049 / DSM 4359 / NBRC 107923 / NS-E)</name>
    <dbReference type="NCBI Taxonomy" id="309803"/>
    <lineage>
        <taxon>Bacteria</taxon>
        <taxon>Thermotogati</taxon>
        <taxon>Thermotogota</taxon>
        <taxon>Thermotogae</taxon>
        <taxon>Thermotogales</taxon>
        <taxon>Thermotogaceae</taxon>
        <taxon>Thermotoga</taxon>
    </lineage>
</organism>
<evidence type="ECO:0000255" key="1">
    <source>
        <dbReference type="HAMAP-Rule" id="MF_00382"/>
    </source>
</evidence>
<evidence type="ECO:0000305" key="2"/>
<accession>B9K7W0</accession>
<dbReference type="EMBL" id="CP000916">
    <property type="protein sequence ID" value="ACM23043.1"/>
    <property type="molecule type" value="Genomic_DNA"/>
</dbReference>
<dbReference type="RefSeq" id="WP_015919360.1">
    <property type="nucleotide sequence ID" value="NC_011978.1"/>
</dbReference>
<dbReference type="SMR" id="B9K7W0"/>
<dbReference type="STRING" id="309803.CTN_0867"/>
<dbReference type="KEGG" id="tna:CTN_0867"/>
<dbReference type="eggNOG" id="COG0292">
    <property type="taxonomic scope" value="Bacteria"/>
</dbReference>
<dbReference type="HOGENOM" id="CLU_123265_0_1_0"/>
<dbReference type="Proteomes" id="UP000000445">
    <property type="component" value="Chromosome"/>
</dbReference>
<dbReference type="GO" id="GO:1990904">
    <property type="term" value="C:ribonucleoprotein complex"/>
    <property type="evidence" value="ECO:0007669"/>
    <property type="project" value="UniProtKB-KW"/>
</dbReference>
<dbReference type="GO" id="GO:0005840">
    <property type="term" value="C:ribosome"/>
    <property type="evidence" value="ECO:0007669"/>
    <property type="project" value="UniProtKB-KW"/>
</dbReference>
<dbReference type="GO" id="GO:0019843">
    <property type="term" value="F:rRNA binding"/>
    <property type="evidence" value="ECO:0007669"/>
    <property type="project" value="UniProtKB-UniRule"/>
</dbReference>
<dbReference type="GO" id="GO:0003735">
    <property type="term" value="F:structural constituent of ribosome"/>
    <property type="evidence" value="ECO:0007669"/>
    <property type="project" value="InterPro"/>
</dbReference>
<dbReference type="GO" id="GO:0000027">
    <property type="term" value="P:ribosomal large subunit assembly"/>
    <property type="evidence" value="ECO:0007669"/>
    <property type="project" value="UniProtKB-UniRule"/>
</dbReference>
<dbReference type="GO" id="GO:0006412">
    <property type="term" value="P:translation"/>
    <property type="evidence" value="ECO:0007669"/>
    <property type="project" value="InterPro"/>
</dbReference>
<dbReference type="CDD" id="cd07026">
    <property type="entry name" value="Ribosomal_L20"/>
    <property type="match status" value="1"/>
</dbReference>
<dbReference type="FunFam" id="1.10.1900.20:FF:000001">
    <property type="entry name" value="50S ribosomal protein L20"/>
    <property type="match status" value="1"/>
</dbReference>
<dbReference type="Gene3D" id="6.10.160.10">
    <property type="match status" value="1"/>
</dbReference>
<dbReference type="Gene3D" id="1.10.1900.20">
    <property type="entry name" value="Ribosomal protein L20"/>
    <property type="match status" value="1"/>
</dbReference>
<dbReference type="HAMAP" id="MF_00382">
    <property type="entry name" value="Ribosomal_bL20"/>
    <property type="match status" value="1"/>
</dbReference>
<dbReference type="InterPro" id="IPR005813">
    <property type="entry name" value="Ribosomal_bL20"/>
</dbReference>
<dbReference type="InterPro" id="IPR049946">
    <property type="entry name" value="RIBOSOMAL_L20_CS"/>
</dbReference>
<dbReference type="InterPro" id="IPR035566">
    <property type="entry name" value="Ribosomal_protein_bL20_C"/>
</dbReference>
<dbReference type="NCBIfam" id="TIGR01032">
    <property type="entry name" value="rplT_bact"/>
    <property type="match status" value="1"/>
</dbReference>
<dbReference type="PANTHER" id="PTHR10986">
    <property type="entry name" value="39S RIBOSOMAL PROTEIN L20"/>
    <property type="match status" value="1"/>
</dbReference>
<dbReference type="Pfam" id="PF00453">
    <property type="entry name" value="Ribosomal_L20"/>
    <property type="match status" value="1"/>
</dbReference>
<dbReference type="PRINTS" id="PR00062">
    <property type="entry name" value="RIBOSOMALL20"/>
</dbReference>
<dbReference type="SUPFAM" id="SSF74731">
    <property type="entry name" value="Ribosomal protein L20"/>
    <property type="match status" value="1"/>
</dbReference>
<dbReference type="PROSITE" id="PS00937">
    <property type="entry name" value="RIBOSOMAL_L20"/>
    <property type="match status" value="1"/>
</dbReference>
<name>RL20_THENN</name>
<feature type="chain" id="PRO_1000134230" description="Large ribosomal subunit protein bL20">
    <location>
        <begin position="1"/>
        <end position="118"/>
    </location>
</feature>
<reference key="1">
    <citation type="submission" date="2007-11" db="EMBL/GenBank/DDBJ databases">
        <title>The genome sequence of the hyperthermophilic bacterium Thermotoga neapolitana.</title>
        <authorList>
            <person name="Lim S.K."/>
            <person name="Kim J.S."/>
            <person name="Cha S.H."/>
            <person name="Park B.C."/>
            <person name="Lee D.S."/>
            <person name="Tae H.S."/>
            <person name="Kim S.-J."/>
            <person name="Kim J.J."/>
            <person name="Park K.J."/>
            <person name="Lee S.Y."/>
        </authorList>
    </citation>
    <scope>NUCLEOTIDE SEQUENCE [LARGE SCALE GENOMIC DNA]</scope>
    <source>
        <strain>ATCC 49049 / DSM 4359 / NBRC 107923 / NS-E</strain>
    </source>
</reference>
<proteinExistence type="inferred from homology"/>